<reference key="1">
    <citation type="journal article" date="2004" name="PLoS Biol.">
        <title>Phylogenomics of the reproductive parasite Wolbachia pipientis wMel: a streamlined genome overrun by mobile genetic elements.</title>
        <authorList>
            <person name="Wu M."/>
            <person name="Sun L.V."/>
            <person name="Vamathevan J.J."/>
            <person name="Riegler M."/>
            <person name="DeBoy R.T."/>
            <person name="Brownlie J.C."/>
            <person name="McGraw E.A."/>
            <person name="Martin W."/>
            <person name="Esser C."/>
            <person name="Ahmadinejad N."/>
            <person name="Wiegand C."/>
            <person name="Madupu R."/>
            <person name="Beanan M.J."/>
            <person name="Brinkac L.M."/>
            <person name="Daugherty S.C."/>
            <person name="Durkin A.S."/>
            <person name="Kolonay J.F."/>
            <person name="Nelson W.C."/>
            <person name="Mohamoud Y."/>
            <person name="Lee P."/>
            <person name="Berry K.J."/>
            <person name="Young M.B."/>
            <person name="Utterback T.R."/>
            <person name="Weidman J.F."/>
            <person name="Nierman W.C."/>
            <person name="Paulsen I.T."/>
            <person name="Nelson K.E."/>
            <person name="Tettelin H."/>
            <person name="O'Neill S.L."/>
            <person name="Eisen J.A."/>
        </authorList>
    </citation>
    <scope>NUCLEOTIDE SEQUENCE [LARGE SCALE GENOMIC DNA]</scope>
</reference>
<name>ENGB_WOLPM</name>
<feature type="chain" id="PRO_0000266978" description="Probable GTP-binding protein EngB">
    <location>
        <begin position="1"/>
        <end position="197"/>
    </location>
</feature>
<feature type="domain" description="EngB-type G" evidence="1">
    <location>
        <begin position="25"/>
        <end position="197"/>
    </location>
</feature>
<feature type="binding site" evidence="1">
    <location>
        <begin position="33"/>
        <end position="40"/>
    </location>
    <ligand>
        <name>GTP</name>
        <dbReference type="ChEBI" id="CHEBI:37565"/>
    </ligand>
</feature>
<feature type="binding site" evidence="1">
    <location>
        <position position="40"/>
    </location>
    <ligand>
        <name>Mg(2+)</name>
        <dbReference type="ChEBI" id="CHEBI:18420"/>
    </ligand>
</feature>
<feature type="binding site" evidence="1">
    <location>
        <begin position="60"/>
        <end position="64"/>
    </location>
    <ligand>
        <name>GTP</name>
        <dbReference type="ChEBI" id="CHEBI:37565"/>
    </ligand>
</feature>
<feature type="binding site" evidence="1">
    <location>
        <position position="62"/>
    </location>
    <ligand>
        <name>Mg(2+)</name>
        <dbReference type="ChEBI" id="CHEBI:18420"/>
    </ligand>
</feature>
<feature type="binding site" evidence="1">
    <location>
        <begin position="79"/>
        <end position="82"/>
    </location>
    <ligand>
        <name>GTP</name>
        <dbReference type="ChEBI" id="CHEBI:37565"/>
    </ligand>
</feature>
<feature type="binding site" evidence="1">
    <location>
        <begin position="146"/>
        <end position="149"/>
    </location>
    <ligand>
        <name>GTP</name>
        <dbReference type="ChEBI" id="CHEBI:37565"/>
    </ligand>
</feature>
<feature type="binding site" evidence="1">
    <location>
        <begin position="177"/>
        <end position="179"/>
    </location>
    <ligand>
        <name>GTP</name>
        <dbReference type="ChEBI" id="CHEBI:37565"/>
    </ligand>
</feature>
<dbReference type="EMBL" id="AE017196">
    <property type="protein sequence ID" value="AAS13989.1"/>
    <property type="molecule type" value="Genomic_DNA"/>
</dbReference>
<dbReference type="SMR" id="Q73IC3"/>
<dbReference type="EnsemblBacteria" id="AAS13989">
    <property type="protein sequence ID" value="AAS13989"/>
    <property type="gene ID" value="WD_0246"/>
</dbReference>
<dbReference type="KEGG" id="wol:WD_0246"/>
<dbReference type="eggNOG" id="COG0218">
    <property type="taxonomic scope" value="Bacteria"/>
</dbReference>
<dbReference type="Proteomes" id="UP000008215">
    <property type="component" value="Chromosome"/>
</dbReference>
<dbReference type="GO" id="GO:0005525">
    <property type="term" value="F:GTP binding"/>
    <property type="evidence" value="ECO:0007669"/>
    <property type="project" value="UniProtKB-UniRule"/>
</dbReference>
<dbReference type="GO" id="GO:0046872">
    <property type="term" value="F:metal ion binding"/>
    <property type="evidence" value="ECO:0007669"/>
    <property type="project" value="UniProtKB-KW"/>
</dbReference>
<dbReference type="GO" id="GO:0000917">
    <property type="term" value="P:division septum assembly"/>
    <property type="evidence" value="ECO:0007669"/>
    <property type="project" value="UniProtKB-KW"/>
</dbReference>
<dbReference type="CDD" id="cd01876">
    <property type="entry name" value="YihA_EngB"/>
    <property type="match status" value="1"/>
</dbReference>
<dbReference type="Gene3D" id="3.40.50.300">
    <property type="entry name" value="P-loop containing nucleotide triphosphate hydrolases"/>
    <property type="match status" value="1"/>
</dbReference>
<dbReference type="HAMAP" id="MF_00321">
    <property type="entry name" value="GTPase_EngB"/>
    <property type="match status" value="1"/>
</dbReference>
<dbReference type="InterPro" id="IPR030393">
    <property type="entry name" value="G_ENGB_dom"/>
</dbReference>
<dbReference type="InterPro" id="IPR006073">
    <property type="entry name" value="GTP-bd"/>
</dbReference>
<dbReference type="InterPro" id="IPR019987">
    <property type="entry name" value="GTP-bd_ribosome_bio_YsxC"/>
</dbReference>
<dbReference type="InterPro" id="IPR027417">
    <property type="entry name" value="P-loop_NTPase"/>
</dbReference>
<dbReference type="NCBIfam" id="TIGR03598">
    <property type="entry name" value="GTPase_YsxC"/>
    <property type="match status" value="1"/>
</dbReference>
<dbReference type="PANTHER" id="PTHR11649:SF13">
    <property type="entry name" value="ENGB-TYPE G DOMAIN-CONTAINING PROTEIN"/>
    <property type="match status" value="1"/>
</dbReference>
<dbReference type="PANTHER" id="PTHR11649">
    <property type="entry name" value="MSS1/TRME-RELATED GTP-BINDING PROTEIN"/>
    <property type="match status" value="1"/>
</dbReference>
<dbReference type="Pfam" id="PF01926">
    <property type="entry name" value="MMR_HSR1"/>
    <property type="match status" value="1"/>
</dbReference>
<dbReference type="SUPFAM" id="SSF52540">
    <property type="entry name" value="P-loop containing nucleoside triphosphate hydrolases"/>
    <property type="match status" value="1"/>
</dbReference>
<dbReference type="PROSITE" id="PS51706">
    <property type="entry name" value="G_ENGB"/>
    <property type="match status" value="1"/>
</dbReference>
<evidence type="ECO:0000255" key="1">
    <source>
        <dbReference type="HAMAP-Rule" id="MF_00321"/>
    </source>
</evidence>
<protein>
    <recommendedName>
        <fullName evidence="1">Probable GTP-binding protein EngB</fullName>
    </recommendedName>
</protein>
<gene>
    <name evidence="1" type="primary">engB</name>
    <name type="ordered locus">WD_0246</name>
</gene>
<accession>Q73IC3</accession>
<proteinExistence type="inferred from homology"/>
<organism>
    <name type="scientific">Wolbachia pipientis wMel</name>
    <dbReference type="NCBI Taxonomy" id="163164"/>
    <lineage>
        <taxon>Bacteria</taxon>
        <taxon>Pseudomonadati</taxon>
        <taxon>Pseudomonadota</taxon>
        <taxon>Alphaproteobacteria</taxon>
        <taxon>Rickettsiales</taxon>
        <taxon>Anaplasmataceae</taxon>
        <taxon>Wolbachieae</taxon>
        <taxon>Wolbachia</taxon>
    </lineage>
</organism>
<keyword id="KW-0131">Cell cycle</keyword>
<keyword id="KW-0132">Cell division</keyword>
<keyword id="KW-0342">GTP-binding</keyword>
<keyword id="KW-0460">Magnesium</keyword>
<keyword id="KW-0479">Metal-binding</keyword>
<keyword id="KW-0547">Nucleotide-binding</keyword>
<keyword id="KW-0717">Septation</keyword>
<comment type="function">
    <text evidence="1">Necessary for normal cell division and for the maintenance of normal septation.</text>
</comment>
<comment type="cofactor">
    <cofactor evidence="1">
        <name>Mg(2+)</name>
        <dbReference type="ChEBI" id="CHEBI:18420"/>
    </cofactor>
</comment>
<comment type="similarity">
    <text evidence="1">Belongs to the TRAFAC class TrmE-Era-EngA-EngB-Septin-like GTPase superfamily. EngB GTPase family.</text>
</comment>
<sequence>MAKQITSNCNFIFGASDIKSLPNESAPEIAFAGRSNVGKSSLINLLINSKKAARVSSKPGCTRQINFYSMYDDKFRLVDLPGYGYSHAGKEEIIQYLNLIEYYLIQRENLRRVFVLIDSKVGLKEIDKDFIYWLIYNNINFNIVLTKIDKVSQKSLGAVIEDIQKWINNENVSIHQMSIRVKHKITKVRDEFFKFTR</sequence>